<protein>
    <recommendedName>
        <fullName evidence="1">UDP-N-acetylglucosamine 1-carboxyvinyltransferase</fullName>
        <ecNumber evidence="1">2.5.1.7</ecNumber>
    </recommendedName>
    <alternativeName>
        <fullName evidence="1">Enoylpyruvate transferase</fullName>
    </alternativeName>
    <alternativeName>
        <fullName evidence="1">UDP-N-acetylglucosamine enolpyruvyl transferase</fullName>
        <shortName evidence="1">EPT</shortName>
    </alternativeName>
</protein>
<comment type="function">
    <text evidence="1">Cell wall formation. Adds enolpyruvyl to UDP-N-acetylglucosamine.</text>
</comment>
<comment type="catalytic activity">
    <reaction evidence="1">
        <text>phosphoenolpyruvate + UDP-N-acetyl-alpha-D-glucosamine = UDP-N-acetyl-3-O-(1-carboxyvinyl)-alpha-D-glucosamine + phosphate</text>
        <dbReference type="Rhea" id="RHEA:18681"/>
        <dbReference type="ChEBI" id="CHEBI:43474"/>
        <dbReference type="ChEBI" id="CHEBI:57705"/>
        <dbReference type="ChEBI" id="CHEBI:58702"/>
        <dbReference type="ChEBI" id="CHEBI:68483"/>
        <dbReference type="EC" id="2.5.1.7"/>
    </reaction>
</comment>
<comment type="pathway">
    <text evidence="1">Cell wall biogenesis; peptidoglycan biosynthesis.</text>
</comment>
<comment type="subcellular location">
    <subcellularLocation>
        <location evidence="1">Cytoplasm</location>
    </subcellularLocation>
</comment>
<comment type="similarity">
    <text evidence="1">Belongs to the EPSP synthase family. MurA subfamily.</text>
</comment>
<reference key="1">
    <citation type="journal article" date="2007" name="J. Bacteriol.">
        <title>Genome sequence and analysis of the soil cellulolytic actinomycete Thermobifida fusca YX.</title>
        <authorList>
            <person name="Lykidis A."/>
            <person name="Mavromatis K."/>
            <person name="Ivanova N."/>
            <person name="Anderson I."/>
            <person name="Land M."/>
            <person name="DiBartolo G."/>
            <person name="Martinez M."/>
            <person name="Lapidus A."/>
            <person name="Lucas S."/>
            <person name="Copeland A."/>
            <person name="Richardson P."/>
            <person name="Wilson D.B."/>
            <person name="Kyrpides N."/>
        </authorList>
    </citation>
    <scope>NUCLEOTIDE SEQUENCE [LARGE SCALE GENOMIC DNA]</scope>
    <source>
        <strain>YX</strain>
    </source>
</reference>
<gene>
    <name evidence="1" type="primary">murA</name>
    <name type="ordered locus">Tfu_3016</name>
</gene>
<evidence type="ECO:0000255" key="1">
    <source>
        <dbReference type="HAMAP-Rule" id="MF_00111"/>
    </source>
</evidence>
<accession>Q47KH3</accession>
<proteinExistence type="inferred from homology"/>
<keyword id="KW-0131">Cell cycle</keyword>
<keyword id="KW-0132">Cell division</keyword>
<keyword id="KW-0133">Cell shape</keyword>
<keyword id="KW-0961">Cell wall biogenesis/degradation</keyword>
<keyword id="KW-0963">Cytoplasm</keyword>
<keyword id="KW-0573">Peptidoglycan synthesis</keyword>
<keyword id="KW-0670">Pyruvate</keyword>
<keyword id="KW-0808">Transferase</keyword>
<organism>
    <name type="scientific">Thermobifida fusca (strain YX)</name>
    <dbReference type="NCBI Taxonomy" id="269800"/>
    <lineage>
        <taxon>Bacteria</taxon>
        <taxon>Bacillati</taxon>
        <taxon>Actinomycetota</taxon>
        <taxon>Actinomycetes</taxon>
        <taxon>Streptosporangiales</taxon>
        <taxon>Nocardiopsidaceae</taxon>
        <taxon>Thermobifida</taxon>
    </lineage>
</organism>
<feature type="chain" id="PRO_0000231290" description="UDP-N-acetylglucosamine 1-carboxyvinyltransferase">
    <location>
        <begin position="1"/>
        <end position="431"/>
    </location>
</feature>
<feature type="active site" description="Proton donor" evidence="1">
    <location>
        <position position="125"/>
    </location>
</feature>
<feature type="binding site" evidence="1">
    <location>
        <begin position="25"/>
        <end position="26"/>
    </location>
    <ligand>
        <name>phosphoenolpyruvate</name>
        <dbReference type="ChEBI" id="CHEBI:58702"/>
    </ligand>
</feature>
<feature type="binding site" evidence="1">
    <location>
        <position position="101"/>
    </location>
    <ligand>
        <name>UDP-N-acetyl-alpha-D-glucosamine</name>
        <dbReference type="ChEBI" id="CHEBI:57705"/>
    </ligand>
</feature>
<feature type="binding site" evidence="1">
    <location>
        <position position="317"/>
    </location>
    <ligand>
        <name>UDP-N-acetyl-alpha-D-glucosamine</name>
        <dbReference type="ChEBI" id="CHEBI:57705"/>
    </ligand>
</feature>
<feature type="binding site" evidence="1">
    <location>
        <position position="339"/>
    </location>
    <ligand>
        <name>UDP-N-acetyl-alpha-D-glucosamine</name>
        <dbReference type="ChEBI" id="CHEBI:57705"/>
    </ligand>
</feature>
<feature type="modified residue" description="2-(S-cysteinyl)pyruvic acid O-phosphothioketal" evidence="1">
    <location>
        <position position="125"/>
    </location>
</feature>
<name>MURA_THEFY</name>
<sequence>MGQEVRYRVRGGHALHGTAFIQGAKNAVLPMIGAALLASKGRTVLRNVPVIEDVRRALELAEYVGAKVEFHEAERTIVIDATGLNDPNRAVLPASIASRFRGSVLFIPALMHRMGRARIEGVGGCNLGSRNLDFHYRGFARLGAEVTEDPERKHINVKADNLKGGRLYLDTPSHTGTENLIMAAALTPGTTVIEHAALEPEVLDVIEFLGSMGAKISGGGTGFIKVEGVSELTAVEHTVMPDRIDTGVFAMMTAATGGDVSLVGANLDHLGVARWKLEQMGVQFTQQGAVLRVRRDPNVPLRPINAVTSPFPGFATDLQPPLMALATLAEGESYIREAIFDGRFALADELNKMGAKIEVEGNRAIVHGPSELHGTKVTAHDLRCGAGAIMAGLVAKGETIVSPAYQVDRGHSHFATRLSALGADVVREEVS</sequence>
<dbReference type="EC" id="2.5.1.7" evidence="1"/>
<dbReference type="EMBL" id="CP000088">
    <property type="protein sequence ID" value="AAZ57049.1"/>
    <property type="molecule type" value="Genomic_DNA"/>
</dbReference>
<dbReference type="RefSeq" id="WP_011293433.1">
    <property type="nucleotide sequence ID" value="NC_007333.1"/>
</dbReference>
<dbReference type="SMR" id="Q47KH3"/>
<dbReference type="STRING" id="269800.Tfu_3016"/>
<dbReference type="KEGG" id="tfu:Tfu_3016"/>
<dbReference type="eggNOG" id="COG0766">
    <property type="taxonomic scope" value="Bacteria"/>
</dbReference>
<dbReference type="HOGENOM" id="CLU_027387_0_0_11"/>
<dbReference type="OrthoDB" id="9803760at2"/>
<dbReference type="UniPathway" id="UPA00219"/>
<dbReference type="GO" id="GO:0005737">
    <property type="term" value="C:cytoplasm"/>
    <property type="evidence" value="ECO:0007669"/>
    <property type="project" value="UniProtKB-SubCell"/>
</dbReference>
<dbReference type="GO" id="GO:0008760">
    <property type="term" value="F:UDP-N-acetylglucosamine 1-carboxyvinyltransferase activity"/>
    <property type="evidence" value="ECO:0007669"/>
    <property type="project" value="UniProtKB-UniRule"/>
</dbReference>
<dbReference type="GO" id="GO:0051301">
    <property type="term" value="P:cell division"/>
    <property type="evidence" value="ECO:0007669"/>
    <property type="project" value="UniProtKB-KW"/>
</dbReference>
<dbReference type="GO" id="GO:0071555">
    <property type="term" value="P:cell wall organization"/>
    <property type="evidence" value="ECO:0007669"/>
    <property type="project" value="UniProtKB-KW"/>
</dbReference>
<dbReference type="GO" id="GO:0009252">
    <property type="term" value="P:peptidoglycan biosynthetic process"/>
    <property type="evidence" value="ECO:0007669"/>
    <property type="project" value="UniProtKB-UniRule"/>
</dbReference>
<dbReference type="GO" id="GO:0008360">
    <property type="term" value="P:regulation of cell shape"/>
    <property type="evidence" value="ECO:0007669"/>
    <property type="project" value="UniProtKB-KW"/>
</dbReference>
<dbReference type="GO" id="GO:0019277">
    <property type="term" value="P:UDP-N-acetylgalactosamine biosynthetic process"/>
    <property type="evidence" value="ECO:0007669"/>
    <property type="project" value="InterPro"/>
</dbReference>
<dbReference type="CDD" id="cd01555">
    <property type="entry name" value="UdpNAET"/>
    <property type="match status" value="1"/>
</dbReference>
<dbReference type="Gene3D" id="3.65.10.10">
    <property type="entry name" value="Enolpyruvate transferase domain"/>
    <property type="match status" value="2"/>
</dbReference>
<dbReference type="HAMAP" id="MF_00111">
    <property type="entry name" value="MurA"/>
    <property type="match status" value="1"/>
</dbReference>
<dbReference type="InterPro" id="IPR001986">
    <property type="entry name" value="Enolpyruvate_Tfrase_dom"/>
</dbReference>
<dbReference type="InterPro" id="IPR036968">
    <property type="entry name" value="Enolpyruvate_Tfrase_sf"/>
</dbReference>
<dbReference type="InterPro" id="IPR050068">
    <property type="entry name" value="MurA_subfamily"/>
</dbReference>
<dbReference type="InterPro" id="IPR013792">
    <property type="entry name" value="RNA3'P_cycl/enolpyr_Trfase_a/b"/>
</dbReference>
<dbReference type="InterPro" id="IPR005750">
    <property type="entry name" value="UDP_GlcNAc_COvinyl_MurA"/>
</dbReference>
<dbReference type="NCBIfam" id="TIGR01072">
    <property type="entry name" value="murA"/>
    <property type="match status" value="1"/>
</dbReference>
<dbReference type="NCBIfam" id="NF006873">
    <property type="entry name" value="PRK09369.1"/>
    <property type="match status" value="1"/>
</dbReference>
<dbReference type="PANTHER" id="PTHR43783">
    <property type="entry name" value="UDP-N-ACETYLGLUCOSAMINE 1-CARBOXYVINYLTRANSFERASE"/>
    <property type="match status" value="1"/>
</dbReference>
<dbReference type="PANTHER" id="PTHR43783:SF1">
    <property type="entry name" value="UDP-N-ACETYLGLUCOSAMINE 1-CARBOXYVINYLTRANSFERASE"/>
    <property type="match status" value="1"/>
</dbReference>
<dbReference type="Pfam" id="PF00275">
    <property type="entry name" value="EPSP_synthase"/>
    <property type="match status" value="1"/>
</dbReference>
<dbReference type="SUPFAM" id="SSF55205">
    <property type="entry name" value="EPT/RTPC-like"/>
    <property type="match status" value="1"/>
</dbReference>